<organism>
    <name type="scientific">Chlamydia pneumoniae</name>
    <name type="common">Chlamydophila pneumoniae</name>
    <dbReference type="NCBI Taxonomy" id="83558"/>
    <lineage>
        <taxon>Bacteria</taxon>
        <taxon>Pseudomonadati</taxon>
        <taxon>Chlamydiota</taxon>
        <taxon>Chlamydiia</taxon>
        <taxon>Chlamydiales</taxon>
        <taxon>Chlamydiaceae</taxon>
        <taxon>Chlamydia/Chlamydophila group</taxon>
        <taxon>Chlamydia</taxon>
    </lineage>
</organism>
<evidence type="ECO:0000255" key="1">
    <source>
        <dbReference type="HAMAP-Rule" id="MF_00480"/>
    </source>
</evidence>
<evidence type="ECO:0000305" key="2"/>
<reference key="1">
    <citation type="journal article" date="1999" name="Nat. Genet.">
        <title>Comparative genomes of Chlamydia pneumoniae and C. trachomatis.</title>
        <authorList>
            <person name="Kalman S."/>
            <person name="Mitchell W.P."/>
            <person name="Marathe R."/>
            <person name="Lammel C.J."/>
            <person name="Fan J."/>
            <person name="Hyman R.W."/>
            <person name="Olinger L."/>
            <person name="Grimwood J."/>
            <person name="Davis R.W."/>
            <person name="Stephens R.S."/>
        </authorList>
    </citation>
    <scope>NUCLEOTIDE SEQUENCE [LARGE SCALE GENOMIC DNA]</scope>
    <source>
        <strain>CWL029</strain>
    </source>
</reference>
<reference key="2">
    <citation type="journal article" date="2000" name="Nucleic Acids Res.">
        <title>Genome sequences of Chlamydia trachomatis MoPn and Chlamydia pneumoniae AR39.</title>
        <authorList>
            <person name="Read T.D."/>
            <person name="Brunham R.C."/>
            <person name="Shen C."/>
            <person name="Gill S.R."/>
            <person name="Heidelberg J.F."/>
            <person name="White O."/>
            <person name="Hickey E.K."/>
            <person name="Peterson J.D."/>
            <person name="Utterback T.R."/>
            <person name="Berry K.J."/>
            <person name="Bass S."/>
            <person name="Linher K.D."/>
            <person name="Weidman J.F."/>
            <person name="Khouri H.M."/>
            <person name="Craven B."/>
            <person name="Bowman C."/>
            <person name="Dodson R.J."/>
            <person name="Gwinn M.L."/>
            <person name="Nelson W.C."/>
            <person name="DeBoy R.T."/>
            <person name="Kolonay J.F."/>
            <person name="McClarty G."/>
            <person name="Salzberg S.L."/>
            <person name="Eisen J.A."/>
            <person name="Fraser C.M."/>
        </authorList>
    </citation>
    <scope>NUCLEOTIDE SEQUENCE [LARGE SCALE GENOMIC DNA]</scope>
    <source>
        <strain>AR39</strain>
    </source>
</reference>
<reference key="3">
    <citation type="journal article" date="2000" name="Nucleic Acids Res.">
        <title>Comparison of whole genome sequences of Chlamydia pneumoniae J138 from Japan and CWL029 from USA.</title>
        <authorList>
            <person name="Shirai M."/>
            <person name="Hirakawa H."/>
            <person name="Kimoto M."/>
            <person name="Tabuchi M."/>
            <person name="Kishi F."/>
            <person name="Ouchi K."/>
            <person name="Shiba T."/>
            <person name="Ishii K."/>
            <person name="Hattori M."/>
            <person name="Kuhara S."/>
            <person name="Nakazawa T."/>
        </authorList>
    </citation>
    <scope>NUCLEOTIDE SEQUENCE [LARGE SCALE GENOMIC DNA]</scope>
    <source>
        <strain>J138</strain>
    </source>
</reference>
<reference key="4">
    <citation type="submission" date="2002-05" db="EMBL/GenBank/DDBJ databases">
        <title>The genome sequence of Chlamydia pneumoniae TW183 and comparison with other Chlamydia strains based on whole genome sequence analysis.</title>
        <authorList>
            <person name="Geng M.M."/>
            <person name="Schuhmacher A."/>
            <person name="Muehldorfer I."/>
            <person name="Bensch K.W."/>
            <person name="Schaefer K.P."/>
            <person name="Schneider S."/>
            <person name="Pohl T."/>
            <person name="Essig A."/>
            <person name="Marre R."/>
            <person name="Melchers K."/>
        </authorList>
    </citation>
    <scope>NUCLEOTIDE SEQUENCE [LARGE SCALE GENOMIC DNA]</scope>
    <source>
        <strain>TW-183</strain>
    </source>
</reference>
<dbReference type="EMBL" id="AE001363">
    <property type="protein sequence ID" value="AAD18691.1"/>
    <property type="molecule type" value="Genomic_DNA"/>
</dbReference>
<dbReference type="EMBL" id="AE002161">
    <property type="protein sequence ID" value="AAF38073.1"/>
    <property type="molecule type" value="Genomic_DNA"/>
</dbReference>
<dbReference type="EMBL" id="BA000008">
    <property type="protein sequence ID" value="BAA98757.1"/>
    <property type="molecule type" value="Genomic_DNA"/>
</dbReference>
<dbReference type="EMBL" id="AE009440">
    <property type="protein sequence ID" value="AAP98501.1"/>
    <property type="molecule type" value="Genomic_DNA"/>
</dbReference>
<dbReference type="PIR" id="C86559">
    <property type="entry name" value="C86559"/>
</dbReference>
<dbReference type="PIR" id="H72065">
    <property type="entry name" value="H72065"/>
</dbReference>
<dbReference type="RefSeq" id="NP_224747.1">
    <property type="nucleotide sequence ID" value="NC_000922.1"/>
</dbReference>
<dbReference type="RefSeq" id="WP_010883189.1">
    <property type="nucleotide sequence ID" value="NZ_LN847257.1"/>
</dbReference>
<dbReference type="SMR" id="Q9Z801"/>
<dbReference type="STRING" id="406984.CPK_ORF01065"/>
<dbReference type="GeneID" id="45050595"/>
<dbReference type="KEGG" id="cpa:CP_0201"/>
<dbReference type="KEGG" id="cpj:rs7"/>
<dbReference type="KEGG" id="cpn:CPn_0551"/>
<dbReference type="KEGG" id="cpt:CpB0572"/>
<dbReference type="PATRIC" id="fig|115713.3.peg.611"/>
<dbReference type="eggNOG" id="COG0049">
    <property type="taxonomic scope" value="Bacteria"/>
</dbReference>
<dbReference type="HOGENOM" id="CLU_072226_1_1_0"/>
<dbReference type="OrthoDB" id="9807653at2"/>
<dbReference type="Proteomes" id="UP000000583">
    <property type="component" value="Chromosome"/>
</dbReference>
<dbReference type="Proteomes" id="UP000000801">
    <property type="component" value="Chromosome"/>
</dbReference>
<dbReference type="GO" id="GO:0015935">
    <property type="term" value="C:small ribosomal subunit"/>
    <property type="evidence" value="ECO:0007669"/>
    <property type="project" value="InterPro"/>
</dbReference>
<dbReference type="GO" id="GO:0019843">
    <property type="term" value="F:rRNA binding"/>
    <property type="evidence" value="ECO:0007669"/>
    <property type="project" value="UniProtKB-UniRule"/>
</dbReference>
<dbReference type="GO" id="GO:0003735">
    <property type="term" value="F:structural constituent of ribosome"/>
    <property type="evidence" value="ECO:0007669"/>
    <property type="project" value="InterPro"/>
</dbReference>
<dbReference type="GO" id="GO:0000049">
    <property type="term" value="F:tRNA binding"/>
    <property type="evidence" value="ECO:0007669"/>
    <property type="project" value="UniProtKB-UniRule"/>
</dbReference>
<dbReference type="GO" id="GO:0006412">
    <property type="term" value="P:translation"/>
    <property type="evidence" value="ECO:0007669"/>
    <property type="project" value="UniProtKB-UniRule"/>
</dbReference>
<dbReference type="CDD" id="cd14869">
    <property type="entry name" value="uS7_Bacteria"/>
    <property type="match status" value="1"/>
</dbReference>
<dbReference type="FunFam" id="1.10.455.10:FF:000001">
    <property type="entry name" value="30S ribosomal protein S7"/>
    <property type="match status" value="1"/>
</dbReference>
<dbReference type="Gene3D" id="1.10.455.10">
    <property type="entry name" value="Ribosomal protein S7 domain"/>
    <property type="match status" value="1"/>
</dbReference>
<dbReference type="HAMAP" id="MF_00480_B">
    <property type="entry name" value="Ribosomal_uS7_B"/>
    <property type="match status" value="1"/>
</dbReference>
<dbReference type="InterPro" id="IPR000235">
    <property type="entry name" value="Ribosomal_uS7"/>
</dbReference>
<dbReference type="InterPro" id="IPR005717">
    <property type="entry name" value="Ribosomal_uS7_bac/org-type"/>
</dbReference>
<dbReference type="InterPro" id="IPR020606">
    <property type="entry name" value="Ribosomal_uS7_CS"/>
</dbReference>
<dbReference type="InterPro" id="IPR023798">
    <property type="entry name" value="Ribosomal_uS7_dom"/>
</dbReference>
<dbReference type="InterPro" id="IPR036823">
    <property type="entry name" value="Ribosomal_uS7_dom_sf"/>
</dbReference>
<dbReference type="NCBIfam" id="TIGR01029">
    <property type="entry name" value="rpsG_bact"/>
    <property type="match status" value="1"/>
</dbReference>
<dbReference type="PANTHER" id="PTHR11205">
    <property type="entry name" value="RIBOSOMAL PROTEIN S7"/>
    <property type="match status" value="1"/>
</dbReference>
<dbReference type="Pfam" id="PF00177">
    <property type="entry name" value="Ribosomal_S7"/>
    <property type="match status" value="1"/>
</dbReference>
<dbReference type="PIRSF" id="PIRSF002122">
    <property type="entry name" value="RPS7p_RPS7a_RPS5e_RPS7o"/>
    <property type="match status" value="1"/>
</dbReference>
<dbReference type="SUPFAM" id="SSF47973">
    <property type="entry name" value="Ribosomal protein S7"/>
    <property type="match status" value="1"/>
</dbReference>
<dbReference type="PROSITE" id="PS00052">
    <property type="entry name" value="RIBOSOMAL_S7"/>
    <property type="match status" value="1"/>
</dbReference>
<gene>
    <name evidence="1" type="primary">rpsG</name>
    <name type="synonym">rs7</name>
    <name type="ordered locus">CPn_0551</name>
    <name type="ordered locus">CP_0201</name>
    <name type="ordered locus">CpB0572</name>
</gene>
<accession>Q9Z801</accession>
<accession>Q9JSD9</accession>
<name>RS7_CHLPN</name>
<protein>
    <recommendedName>
        <fullName evidence="1">Small ribosomal subunit protein uS7</fullName>
    </recommendedName>
    <alternativeName>
        <fullName evidence="2">30S ribosomal protein S7</fullName>
    </alternativeName>
</protein>
<sequence length="157" mass="17840">MSRRHSAEKRDIPGDPIYGSVILEKFINKVMMHGKKSVARKIVYSALERFGKKLNLENVLEGFGEALENAKPILEVRSRRVGGATYQVPVEVASERRNCLAMQWIIKHARSKPGKSMEVGLATELIDCFNKQGATIKKREDTHRMAEANKAFAHYKW</sequence>
<proteinExistence type="inferred from homology"/>
<feature type="chain" id="PRO_0000124245" description="Small ribosomal subunit protein uS7">
    <location>
        <begin position="1"/>
        <end position="157"/>
    </location>
</feature>
<feature type="sequence conflict" description="In Ref. 3; BAA98757." evidence="2" ref="3">
    <original>EAN</original>
    <variation>DAY</variation>
    <location>
        <begin position="147"/>
        <end position="149"/>
    </location>
</feature>
<feature type="sequence conflict" description="In Ref. 3; BAA98757." evidence="2" ref="3">
    <original>W</original>
    <variation>WVRLVKLRRK</variation>
    <location>
        <position position="157"/>
    </location>
</feature>
<keyword id="KW-0687">Ribonucleoprotein</keyword>
<keyword id="KW-0689">Ribosomal protein</keyword>
<keyword id="KW-0694">RNA-binding</keyword>
<keyword id="KW-0699">rRNA-binding</keyword>
<keyword id="KW-0820">tRNA-binding</keyword>
<comment type="function">
    <text evidence="1">One of the primary rRNA binding proteins, it binds directly to 16S rRNA where it nucleates assembly of the head domain of the 30S subunit. Is located at the subunit interface close to the decoding center, probably blocks exit of the E-site tRNA.</text>
</comment>
<comment type="subunit">
    <text evidence="1">Part of the 30S ribosomal subunit. Contacts proteins S9 and S11.</text>
</comment>
<comment type="similarity">
    <text evidence="1">Belongs to the universal ribosomal protein uS7 family.</text>
</comment>